<proteinExistence type="evidence at protein level"/>
<comment type="function">
    <text>Paramyosin is a major structural component of many thick filaments isolated from invertebrate muscles.</text>
</comment>
<comment type="subunit">
    <text evidence="3">Heterodimer of two isoforms.</text>
</comment>
<comment type="subcellular location">
    <subcellularLocation>
        <location>Cytoplasm</location>
        <location>Myofibril</location>
    </subcellularLocation>
    <text>Thick filaments of the myofibrils.</text>
</comment>
<comment type="alternative products">
    <event type="alternative splicing"/>
    <isoform>
        <id>P35415-1</id>
        <name>Long</name>
        <name>A</name>
        <name>B</name>
        <sequence type="displayed"/>
    </isoform>
    <isoform>
        <id>P35416-1</id>
        <name>Short</name>
        <name>C</name>
        <name>D</name>
        <sequence type="external"/>
    </isoform>
    <text>Additional isoforms seem to exist. Isoforms can also be produced by post-translational modifications.</text>
</comment>
<comment type="tissue specificity">
    <text>Expressed in all larval and adult muscle tissues. Expression is five times higher in tubular than in fibrillar muscles.</text>
</comment>
<comment type="developmental stage">
    <text>Undetectable during gastrulation and early phases of germ band formation. Increases during organogenesis, around 10 hours post-fertilization (hpf), to the adult stage.</text>
</comment>
<comment type="PTM">
    <text evidence="2">The more-acidic and less-abundant isoform is phosphorylated.</text>
</comment>
<comment type="similarity">
    <text evidence="3">Belongs to the paramyosin family.</text>
</comment>
<comment type="sequence caution" evidence="3">
    <conflict type="erroneous termination">
        <sequence resource="EMBL-CDS" id="AAL39277"/>
    </conflict>
    <text>Truncated C-terminus.</text>
</comment>
<reference key="1">
    <citation type="journal article" date="1992" name="J. Cell Biol.">
        <title>Analysis of Drosophila paramyosin: identification of a novel isoform which is restricted to a subset of adult muscles.</title>
        <authorList>
            <person name="Becker K.D."/>
            <person name="O'Donnell P.T."/>
            <person name="Heitz J.M."/>
            <person name="Vito M."/>
            <person name="Bernstein S.I."/>
        </authorList>
    </citation>
    <scope>NUCLEOTIDE SEQUENCE [MRNA]</scope>
    <source>
        <strain>Canton-S</strain>
        <tissue>Muscle</tissue>
    </source>
</reference>
<reference key="2">
    <citation type="journal article" date="1992" name="Mol. Gen. Genet.">
        <title>Drosophila melanogaster paramyosin: developmental pattern, mapping and properties deduced from its complete coding sequence.</title>
        <authorList>
            <person name="Vinos J."/>
            <person name="Maroto M."/>
            <person name="Garesse R."/>
            <person name="Marco R."/>
            <person name="Cervera M."/>
        </authorList>
    </citation>
    <scope>NUCLEOTIDE SEQUENCE [MRNA]</scope>
</reference>
<reference key="3">
    <citation type="journal article" date="2000" name="Science">
        <title>The genome sequence of Drosophila melanogaster.</title>
        <authorList>
            <person name="Adams M.D."/>
            <person name="Celniker S.E."/>
            <person name="Holt R.A."/>
            <person name="Evans C.A."/>
            <person name="Gocayne J.D."/>
            <person name="Amanatides P.G."/>
            <person name="Scherer S.E."/>
            <person name="Li P.W."/>
            <person name="Hoskins R.A."/>
            <person name="Galle R.F."/>
            <person name="George R.A."/>
            <person name="Lewis S.E."/>
            <person name="Richards S."/>
            <person name="Ashburner M."/>
            <person name="Henderson S.N."/>
            <person name="Sutton G.G."/>
            <person name="Wortman J.R."/>
            <person name="Yandell M.D."/>
            <person name="Zhang Q."/>
            <person name="Chen L.X."/>
            <person name="Brandon R.C."/>
            <person name="Rogers Y.-H.C."/>
            <person name="Blazej R.G."/>
            <person name="Champe M."/>
            <person name="Pfeiffer B.D."/>
            <person name="Wan K.H."/>
            <person name="Doyle C."/>
            <person name="Baxter E.G."/>
            <person name="Helt G."/>
            <person name="Nelson C.R."/>
            <person name="Miklos G.L.G."/>
            <person name="Abril J.F."/>
            <person name="Agbayani A."/>
            <person name="An H.-J."/>
            <person name="Andrews-Pfannkoch C."/>
            <person name="Baldwin D."/>
            <person name="Ballew R.M."/>
            <person name="Basu A."/>
            <person name="Baxendale J."/>
            <person name="Bayraktaroglu L."/>
            <person name="Beasley E.M."/>
            <person name="Beeson K.Y."/>
            <person name="Benos P.V."/>
            <person name="Berman B.P."/>
            <person name="Bhandari D."/>
            <person name="Bolshakov S."/>
            <person name="Borkova D."/>
            <person name="Botchan M.R."/>
            <person name="Bouck J."/>
            <person name="Brokstein P."/>
            <person name="Brottier P."/>
            <person name="Burtis K.C."/>
            <person name="Busam D.A."/>
            <person name="Butler H."/>
            <person name="Cadieu E."/>
            <person name="Center A."/>
            <person name="Chandra I."/>
            <person name="Cherry J.M."/>
            <person name="Cawley S."/>
            <person name="Dahlke C."/>
            <person name="Davenport L.B."/>
            <person name="Davies P."/>
            <person name="de Pablos B."/>
            <person name="Delcher A."/>
            <person name="Deng Z."/>
            <person name="Mays A.D."/>
            <person name="Dew I."/>
            <person name="Dietz S.M."/>
            <person name="Dodson K."/>
            <person name="Doup L.E."/>
            <person name="Downes M."/>
            <person name="Dugan-Rocha S."/>
            <person name="Dunkov B.C."/>
            <person name="Dunn P."/>
            <person name="Durbin K.J."/>
            <person name="Evangelista C.C."/>
            <person name="Ferraz C."/>
            <person name="Ferriera S."/>
            <person name="Fleischmann W."/>
            <person name="Fosler C."/>
            <person name="Gabrielian A.E."/>
            <person name="Garg N.S."/>
            <person name="Gelbart W.M."/>
            <person name="Glasser K."/>
            <person name="Glodek A."/>
            <person name="Gong F."/>
            <person name="Gorrell J.H."/>
            <person name="Gu Z."/>
            <person name="Guan P."/>
            <person name="Harris M."/>
            <person name="Harris N.L."/>
            <person name="Harvey D.A."/>
            <person name="Heiman T.J."/>
            <person name="Hernandez J.R."/>
            <person name="Houck J."/>
            <person name="Hostin D."/>
            <person name="Houston K.A."/>
            <person name="Howland T.J."/>
            <person name="Wei M.-H."/>
            <person name="Ibegwam C."/>
            <person name="Jalali M."/>
            <person name="Kalush F."/>
            <person name="Karpen G.H."/>
            <person name="Ke Z."/>
            <person name="Kennison J.A."/>
            <person name="Ketchum K.A."/>
            <person name="Kimmel B.E."/>
            <person name="Kodira C.D."/>
            <person name="Kraft C.L."/>
            <person name="Kravitz S."/>
            <person name="Kulp D."/>
            <person name="Lai Z."/>
            <person name="Lasko P."/>
            <person name="Lei Y."/>
            <person name="Levitsky A.A."/>
            <person name="Li J.H."/>
            <person name="Li Z."/>
            <person name="Liang Y."/>
            <person name="Lin X."/>
            <person name="Liu X."/>
            <person name="Mattei B."/>
            <person name="McIntosh T.C."/>
            <person name="McLeod M.P."/>
            <person name="McPherson D."/>
            <person name="Merkulov G."/>
            <person name="Milshina N.V."/>
            <person name="Mobarry C."/>
            <person name="Morris J."/>
            <person name="Moshrefi A."/>
            <person name="Mount S.M."/>
            <person name="Moy M."/>
            <person name="Murphy B."/>
            <person name="Murphy L."/>
            <person name="Muzny D.M."/>
            <person name="Nelson D.L."/>
            <person name="Nelson D.R."/>
            <person name="Nelson K.A."/>
            <person name="Nixon K."/>
            <person name="Nusskern D.R."/>
            <person name="Pacleb J.M."/>
            <person name="Palazzolo M."/>
            <person name="Pittman G.S."/>
            <person name="Pan S."/>
            <person name="Pollard J."/>
            <person name="Puri V."/>
            <person name="Reese M.G."/>
            <person name="Reinert K."/>
            <person name="Remington K."/>
            <person name="Saunders R.D.C."/>
            <person name="Scheeler F."/>
            <person name="Shen H."/>
            <person name="Shue B.C."/>
            <person name="Siden-Kiamos I."/>
            <person name="Simpson M."/>
            <person name="Skupski M.P."/>
            <person name="Smith T.J."/>
            <person name="Spier E."/>
            <person name="Spradling A.C."/>
            <person name="Stapleton M."/>
            <person name="Strong R."/>
            <person name="Sun E."/>
            <person name="Svirskas R."/>
            <person name="Tector C."/>
            <person name="Turner R."/>
            <person name="Venter E."/>
            <person name="Wang A.H."/>
            <person name="Wang X."/>
            <person name="Wang Z.-Y."/>
            <person name="Wassarman D.A."/>
            <person name="Weinstock G.M."/>
            <person name="Weissenbach J."/>
            <person name="Williams S.M."/>
            <person name="Woodage T."/>
            <person name="Worley K.C."/>
            <person name="Wu D."/>
            <person name="Yang S."/>
            <person name="Yao Q.A."/>
            <person name="Ye J."/>
            <person name="Yeh R.-F."/>
            <person name="Zaveri J.S."/>
            <person name="Zhan M."/>
            <person name="Zhang G."/>
            <person name="Zhao Q."/>
            <person name="Zheng L."/>
            <person name="Zheng X.H."/>
            <person name="Zhong F.N."/>
            <person name="Zhong W."/>
            <person name="Zhou X."/>
            <person name="Zhu S.C."/>
            <person name="Zhu X."/>
            <person name="Smith H.O."/>
            <person name="Gibbs R.A."/>
            <person name="Myers E.W."/>
            <person name="Rubin G.M."/>
            <person name="Venter J.C."/>
        </authorList>
    </citation>
    <scope>NUCLEOTIDE SEQUENCE [LARGE SCALE GENOMIC DNA]</scope>
    <source>
        <strain>Berkeley</strain>
    </source>
</reference>
<reference key="4">
    <citation type="journal article" date="2002" name="Genome Biol.">
        <title>Annotation of the Drosophila melanogaster euchromatic genome: a systematic review.</title>
        <authorList>
            <person name="Misra S."/>
            <person name="Crosby M.A."/>
            <person name="Mungall C.J."/>
            <person name="Matthews B.B."/>
            <person name="Campbell K.S."/>
            <person name="Hradecky P."/>
            <person name="Huang Y."/>
            <person name="Kaminker J.S."/>
            <person name="Millburn G.H."/>
            <person name="Prochnik S.E."/>
            <person name="Smith C.D."/>
            <person name="Tupy J.L."/>
            <person name="Whitfield E.J."/>
            <person name="Bayraktaroglu L."/>
            <person name="Berman B.P."/>
            <person name="Bettencourt B.R."/>
            <person name="Celniker S.E."/>
            <person name="de Grey A.D.N.J."/>
            <person name="Drysdale R.A."/>
            <person name="Harris N.L."/>
            <person name="Richter J."/>
            <person name="Russo S."/>
            <person name="Schroeder A.J."/>
            <person name="Shu S.Q."/>
            <person name="Stapleton M."/>
            <person name="Yamada C."/>
            <person name="Ashburner M."/>
            <person name="Gelbart W.M."/>
            <person name="Rubin G.M."/>
            <person name="Lewis S.E."/>
        </authorList>
    </citation>
    <scope>GENOME REANNOTATION</scope>
    <source>
        <strain>Berkeley</strain>
    </source>
</reference>
<reference key="5">
    <citation type="journal article" date="2002" name="Genome Biol.">
        <title>A Drosophila full-length cDNA resource.</title>
        <authorList>
            <person name="Stapleton M."/>
            <person name="Carlson J.W."/>
            <person name="Brokstein P."/>
            <person name="Yu C."/>
            <person name="Champe M."/>
            <person name="George R.A."/>
            <person name="Guarin H."/>
            <person name="Kronmiller B."/>
            <person name="Pacleb J.M."/>
            <person name="Park S."/>
            <person name="Wan K.H."/>
            <person name="Rubin G.M."/>
            <person name="Celniker S.E."/>
        </authorList>
    </citation>
    <scope>NUCLEOTIDE SEQUENCE [LARGE SCALE MRNA]</scope>
    <source>
        <strain>Berkeley</strain>
        <tissue>Head</tissue>
    </source>
</reference>
<reference key="6">
    <citation type="journal article" date="1991" name="J. Mol. Biol.">
        <title>Identification and characterization of Drosophila melanogaster paramyosin.</title>
        <authorList>
            <person name="Vinos J."/>
            <person name="Domingo A."/>
            <person name="Marco R."/>
            <person name="Cervera M."/>
        </authorList>
    </citation>
    <scope>NUCLEOTIDE SEQUENCE [MRNA] OF 103-571</scope>
    <scope>CHARACTERIZATION</scope>
    <source>
        <strain>Oregon-R</strain>
    </source>
</reference>
<reference key="7">
    <citation type="journal article" date="2008" name="J. Proteome Res.">
        <title>Phosphoproteome analysis of Drosophila melanogaster embryos.</title>
        <authorList>
            <person name="Zhai B."/>
            <person name="Villen J."/>
            <person name="Beausoleil S.A."/>
            <person name="Mintseris J."/>
            <person name="Gygi S.P."/>
        </authorList>
    </citation>
    <scope>PHOSPHORYLATION [LARGE SCALE ANALYSIS] AT SER-18</scope>
    <scope>IDENTIFICATION BY MASS SPECTROMETRY</scope>
    <source>
        <tissue>Embryo</tissue>
    </source>
</reference>
<protein>
    <recommendedName>
        <fullName>Paramyosin, long form</fullName>
    </recommendedName>
</protein>
<evidence type="ECO:0000255" key="1"/>
<evidence type="ECO:0000269" key="2">
    <source>
    </source>
</evidence>
<evidence type="ECO:0000305" key="3"/>
<name>MYSP1_DROME</name>
<accession>P35415</accession>
<accession>Q8T0Q3</accession>
<accession>Q9VSP6</accession>
<feature type="chain" id="PRO_0000211249" description="Paramyosin, long form">
    <location>
        <begin position="1"/>
        <end position="879"/>
    </location>
</feature>
<feature type="region of interest" description="Nonhelical region" evidence="1">
    <location>
        <begin position="1"/>
        <end position="31"/>
    </location>
</feature>
<feature type="region of interest" description="Nonhelical region" evidence="1">
    <location>
        <begin position="859"/>
        <end position="879"/>
    </location>
</feature>
<feature type="coiled-coil region" evidence="1">
    <location>
        <begin position="32"/>
        <end position="858"/>
    </location>
</feature>
<feature type="modified residue" description="Phosphoserine" evidence="2">
    <location>
        <position position="18"/>
    </location>
</feature>
<feature type="disulfide bond" description="Interchain" evidence="1">
    <location>
        <position position="368"/>
    </location>
</feature>
<feature type="disulfide bond" description="Interchain" evidence="1">
    <location>
        <position position="784"/>
    </location>
</feature>
<feature type="sequence conflict" description="In Ref. 2; CAA41557." evidence="3" ref="2">
    <location>
        <position position="500"/>
    </location>
</feature>
<keyword id="KW-0025">Alternative splicing</keyword>
<keyword id="KW-0175">Coiled coil</keyword>
<keyword id="KW-0963">Cytoplasm</keyword>
<keyword id="KW-1015">Disulfide bond</keyword>
<keyword id="KW-0505">Motor protein</keyword>
<keyword id="KW-0514">Muscle protein</keyword>
<keyword id="KW-0518">Myosin</keyword>
<keyword id="KW-0597">Phosphoprotein</keyword>
<keyword id="KW-1185">Reference proteome</keyword>
<keyword id="KW-0787">Thick filament</keyword>
<sequence>MSSSQAVRSSKYSYRATSTGPGTADVNIEYIQDLSSLSRLEDKIRLLQDDLEVERELRQRIEREKADLSVQVIQMSERLEEAEGGAEHQFEANRKRDAELLKLRKLLEDVHLESEETTLLLKKKHNEIITDFQEQVEILTKNKARAEKDKAKFQTEVYELLSQIESYNKEKIVSEKHISKLEVSISELNVKIEELNRTVIDISSHRSRLSQENIELTKDVQDLKVQLDTVSFSKSQVISQLEDARRRLEDEDRRRSLLESSLHQVEIELDSVRNQLEEESEARIDLERQLVKANADATSWQNKWNSEVAARAEEVEEIRRKYQVRITELEEHIESLIVKVNNLEKMKTRLASEVEVLIIDLEKSNNSCRELTKSVNTLEKHNVELKSRLDETIILYETSQRDLKNKHADLVRTVHELDKVKDNNNQLTRENKKLGDDLHEAKGAINELNRRLHELELELRRLENERDELTAAYKEAEAGRKAEEQRGQRLAADFNQYRHDAERRLAEKDEEIEAIRKQTSIEIEQLNARVIEAETRLKTEVTRIKKKLQIQITELEMSLDVANKTNIDLQKVIKKQSLQLTELQAHYEDVQRQLQATLDQYAVAQRRLAGLNGELEEVRSHLDSANRAKRTVELQYEEAASRINELTTANVSLVSIKSKLEQELSVVASDYEEVSKELRISDERYQKVQVELKHVVEQVHEEQERIVKLETIKKSLEVEVKNLSIRLEEVELNAVAGSKRIISKLEARIRDLELELEEEKRRHAETIKILRKKERTVKEVLVQCEEDQKNLILLQDALDKSTAKINIYRRQLSEQEGVSQQTTTRVRRFQRELEAAEDRADTAESSLNIIRAKHRTFVTTSTVPGSQVYIQETTRTITE</sequence>
<gene>
    <name type="primary">Prm</name>
    <name type="ORF">CG5939</name>
</gene>
<organism>
    <name type="scientific">Drosophila melanogaster</name>
    <name type="common">Fruit fly</name>
    <dbReference type="NCBI Taxonomy" id="7227"/>
    <lineage>
        <taxon>Eukaryota</taxon>
        <taxon>Metazoa</taxon>
        <taxon>Ecdysozoa</taxon>
        <taxon>Arthropoda</taxon>
        <taxon>Hexapoda</taxon>
        <taxon>Insecta</taxon>
        <taxon>Pterygota</taxon>
        <taxon>Neoptera</taxon>
        <taxon>Endopterygota</taxon>
        <taxon>Diptera</taxon>
        <taxon>Brachycera</taxon>
        <taxon>Muscomorpha</taxon>
        <taxon>Ephydroidea</taxon>
        <taxon>Drosophilidae</taxon>
        <taxon>Drosophila</taxon>
        <taxon>Sophophora</taxon>
    </lineage>
</organism>
<dbReference type="EMBL" id="X62590">
    <property type="protein sequence ID" value="CAA44475.1"/>
    <property type="molecule type" value="mRNA"/>
</dbReference>
<dbReference type="EMBL" id="X58722">
    <property type="protein sequence ID" value="CAA41557.1"/>
    <property type="molecule type" value="mRNA"/>
</dbReference>
<dbReference type="EMBL" id="AE014296">
    <property type="protein sequence ID" value="AAF50370.1"/>
    <property type="molecule type" value="Genomic_DNA"/>
</dbReference>
<dbReference type="EMBL" id="AY069132">
    <property type="protein sequence ID" value="AAL39277.1"/>
    <property type="status" value="ALT_SEQ"/>
    <property type="molecule type" value="mRNA"/>
</dbReference>
<dbReference type="PIR" id="S22028">
    <property type="entry name" value="S22028"/>
</dbReference>
<dbReference type="RefSeq" id="NP_523982.2">
    <molecule id="P35415-1"/>
    <property type="nucleotide sequence ID" value="NM_079258.3"/>
</dbReference>
<dbReference type="RefSeq" id="NP_729405.1">
    <molecule id="P35415-1"/>
    <property type="nucleotide sequence ID" value="NM_168290.3"/>
</dbReference>
<dbReference type="SMR" id="P35415"/>
<dbReference type="BioGRID" id="64408">
    <property type="interactions" value="60"/>
</dbReference>
<dbReference type="DIP" id="DIP-17473N"/>
<dbReference type="FunCoup" id="P35415">
    <property type="interactions" value="271"/>
</dbReference>
<dbReference type="IntAct" id="P35415">
    <property type="interactions" value="9"/>
</dbReference>
<dbReference type="STRING" id="7227.FBpp0076320"/>
<dbReference type="iPTMnet" id="P35415"/>
<dbReference type="PaxDb" id="7227-FBpp0076320"/>
<dbReference type="DNASU" id="39002"/>
<dbReference type="EnsemblMetazoa" id="FBtr0076593">
    <molecule id="P35415-1"/>
    <property type="protein sequence ID" value="FBpp0076320"/>
    <property type="gene ID" value="FBgn0003149"/>
</dbReference>
<dbReference type="EnsemblMetazoa" id="FBtr0076594">
    <molecule id="P35415-1"/>
    <property type="protein sequence ID" value="FBpp0076321"/>
    <property type="gene ID" value="FBgn0003149"/>
</dbReference>
<dbReference type="GeneID" id="39002"/>
<dbReference type="KEGG" id="dme:Dmel_CG5939"/>
<dbReference type="AGR" id="FB:FBgn0003149"/>
<dbReference type="CTD" id="39002"/>
<dbReference type="FlyBase" id="FBgn0003149">
    <property type="gene designation" value="Prm"/>
</dbReference>
<dbReference type="VEuPathDB" id="VectorBase:FBgn0003149"/>
<dbReference type="eggNOG" id="KOG0161">
    <property type="taxonomic scope" value="Eukaryota"/>
</dbReference>
<dbReference type="GeneTree" id="ENSGT00940000173651"/>
<dbReference type="HOGENOM" id="CLU_000192_13_6_1"/>
<dbReference type="InParanoid" id="P35415"/>
<dbReference type="OMA" id="HYDEVHR"/>
<dbReference type="OrthoDB" id="2018427at2759"/>
<dbReference type="PhylomeDB" id="P35415"/>
<dbReference type="SignaLink" id="P35415"/>
<dbReference type="BioGRID-ORCS" id="39002">
    <property type="hits" value="0 hits in 3 CRISPR screens"/>
</dbReference>
<dbReference type="ChiTaRS" id="Prm">
    <property type="organism name" value="fly"/>
</dbReference>
<dbReference type="GenomeRNAi" id="39002"/>
<dbReference type="Proteomes" id="UP000000803">
    <property type="component" value="Chromosome 3L"/>
</dbReference>
<dbReference type="Bgee" id="FBgn0003149">
    <property type="expression patterns" value="Expressed in oviduct (Drosophila) and 99 other cell types or tissues"/>
</dbReference>
<dbReference type="ExpressionAtlas" id="P35415">
    <property type="expression patterns" value="baseline and differential"/>
</dbReference>
<dbReference type="GO" id="GO:0005737">
    <property type="term" value="C:cytoplasm"/>
    <property type="evidence" value="ECO:0000318"/>
    <property type="project" value="GO_Central"/>
</dbReference>
<dbReference type="GO" id="GO:0005856">
    <property type="term" value="C:cytoskeleton"/>
    <property type="evidence" value="ECO:0000318"/>
    <property type="project" value="GO_Central"/>
</dbReference>
<dbReference type="GO" id="GO:0031430">
    <property type="term" value="C:M band"/>
    <property type="evidence" value="ECO:0007005"/>
    <property type="project" value="FlyBase"/>
</dbReference>
<dbReference type="GO" id="GO:0016459">
    <property type="term" value="C:myosin complex"/>
    <property type="evidence" value="ECO:0007669"/>
    <property type="project" value="UniProtKB-KW"/>
</dbReference>
<dbReference type="GO" id="GO:0005863">
    <property type="term" value="C:striated muscle myosin thick filament"/>
    <property type="evidence" value="ECO:0007005"/>
    <property type="project" value="FlyBase"/>
</dbReference>
<dbReference type="GO" id="GO:0072518">
    <property type="term" value="F:Rho-dependent protein serine/threonine kinase activity"/>
    <property type="evidence" value="ECO:0000318"/>
    <property type="project" value="GO_Central"/>
</dbReference>
<dbReference type="GO" id="GO:0031032">
    <property type="term" value="P:actomyosin structure organization"/>
    <property type="evidence" value="ECO:0000318"/>
    <property type="project" value="GO_Central"/>
</dbReference>
<dbReference type="GO" id="GO:0030866">
    <property type="term" value="P:cortical actin cytoskeleton organization"/>
    <property type="evidence" value="ECO:0000318"/>
    <property type="project" value="GO_Central"/>
</dbReference>
<dbReference type="GO" id="GO:0048598">
    <property type="term" value="P:embryonic morphogenesis"/>
    <property type="evidence" value="ECO:0000318"/>
    <property type="project" value="GO_Central"/>
</dbReference>
<dbReference type="GO" id="GO:0007498">
    <property type="term" value="P:mesoderm development"/>
    <property type="evidence" value="ECO:0000270"/>
    <property type="project" value="FlyBase"/>
</dbReference>
<dbReference type="GO" id="GO:0000281">
    <property type="term" value="P:mitotic cytokinesis"/>
    <property type="evidence" value="ECO:0000318"/>
    <property type="project" value="GO_Central"/>
</dbReference>
<dbReference type="GO" id="GO:0030239">
    <property type="term" value="P:myofibril assembly"/>
    <property type="evidence" value="ECO:0000315"/>
    <property type="project" value="FlyBase"/>
</dbReference>
<dbReference type="GO" id="GO:0032956">
    <property type="term" value="P:regulation of actin cytoskeleton organization"/>
    <property type="evidence" value="ECO:0000318"/>
    <property type="project" value="GO_Central"/>
</dbReference>
<dbReference type="GO" id="GO:1901888">
    <property type="term" value="P:regulation of cell junction assembly"/>
    <property type="evidence" value="ECO:0000318"/>
    <property type="project" value="GO_Central"/>
</dbReference>
<dbReference type="GO" id="GO:0007266">
    <property type="term" value="P:Rho protein signal transduction"/>
    <property type="evidence" value="ECO:0000318"/>
    <property type="project" value="GO_Central"/>
</dbReference>
<dbReference type="FunFam" id="1.20.5.340:FF:000035">
    <property type="entry name" value="Paramyosin, long form"/>
    <property type="match status" value="1"/>
</dbReference>
<dbReference type="Gene3D" id="1.20.5.340">
    <property type="match status" value="1"/>
</dbReference>
<dbReference type="Gene3D" id="1.20.5.370">
    <property type="match status" value="1"/>
</dbReference>
<dbReference type="Gene3D" id="1.20.5.1160">
    <property type="entry name" value="Vasodilator-stimulated phosphoprotein"/>
    <property type="match status" value="1"/>
</dbReference>
<dbReference type="InterPro" id="IPR002928">
    <property type="entry name" value="Myosin_tail"/>
</dbReference>
<dbReference type="InterPro" id="IPR014751">
    <property type="entry name" value="XRCC4-like_C"/>
</dbReference>
<dbReference type="PANTHER" id="PTHR46349">
    <property type="entry name" value="CINGULIN-LIKE PROTEIN 1-RELATED"/>
    <property type="match status" value="1"/>
</dbReference>
<dbReference type="PANTHER" id="PTHR46349:SF7">
    <property type="entry name" value="MYOSIN TAIL DOMAIN-CONTAINING PROTEIN"/>
    <property type="match status" value="1"/>
</dbReference>
<dbReference type="Pfam" id="PF01576">
    <property type="entry name" value="Myosin_tail_1"/>
    <property type="match status" value="1"/>
</dbReference>
<dbReference type="SUPFAM" id="SSF90257">
    <property type="entry name" value="Myosin rod fragments"/>
    <property type="match status" value="3"/>
</dbReference>